<evidence type="ECO:0000250" key="1"/>
<evidence type="ECO:0000255" key="2"/>
<evidence type="ECO:0000305" key="3"/>
<reference key="1">
    <citation type="submission" date="2003-11" db="EMBL/GenBank/DDBJ databases">
        <title>Molecular cloning and characterization of upland Cotton (Gossypium hirsutum) long chain fatty acid elongation enzyme.</title>
        <authorList>
            <person name="Li J."/>
            <person name="Xu Y."/>
            <person name="Zhu Y."/>
        </authorList>
    </citation>
    <scope>NUCLEOTIDE SEQUENCE [MRNA]</scope>
    <source>
        <strain>cv. Xuzhou 142</strain>
    </source>
</reference>
<reference key="2">
    <citation type="journal article" date="2014" name="Plant Physiol.">
        <title>Functional and evolutionary analysis of the CASPARIAN STRIP MEMBRANE DOMAIN PROTEIN family.</title>
        <authorList>
            <person name="Roppolo D."/>
            <person name="Boeckmann B."/>
            <person name="Pfister A."/>
            <person name="Boutet E."/>
            <person name="Rubio M.C."/>
            <person name="Denervaud-Tendon V."/>
            <person name="Vermeer J.E."/>
            <person name="Gheyselinck J."/>
            <person name="Xenarios I."/>
            <person name="Geldner N."/>
        </authorList>
    </citation>
    <scope>GENE FAMILY</scope>
    <scope>NOMENCLATURE</scope>
</reference>
<keyword id="KW-1003">Cell membrane</keyword>
<keyword id="KW-0472">Membrane</keyword>
<keyword id="KW-1185">Reference proteome</keyword>
<keyword id="KW-0812">Transmembrane</keyword>
<keyword id="KW-1133">Transmembrane helix</keyword>
<proteinExistence type="evidence at transcript level"/>
<sequence>MELSIQKIEALIRLSTIVMLVLTACLIGLDSQTKVIFYVQKKASFKDLRALVGLLYITSLAAAYNLLQLCCSSFSASYKGTSLQSYAYLAWLRYILDQAVVYAVFAGNLAALEHSFLVLTGEENFQWLKWCNKYTRFCTQIGGSLLCGFVASLLMFSIASISAFNLFRQYSPTKFMHLKL</sequence>
<comment type="subunit">
    <text evidence="1">Homodimer and heterodimers.</text>
</comment>
<comment type="subcellular location">
    <subcellularLocation>
        <location evidence="1">Cell membrane</location>
        <topology evidence="1">Multi-pass membrane protein</topology>
    </subcellularLocation>
</comment>
<comment type="similarity">
    <text evidence="3">Belongs to the Casparian strip membrane proteins (CASP) family.</text>
</comment>
<name>CSPL2_GOSHI</name>
<dbReference type="EMBL" id="AJ608936">
    <property type="protein sequence ID" value="CAE75666.1"/>
    <property type="molecule type" value="mRNA"/>
</dbReference>
<dbReference type="SMR" id="Q5K4H9"/>
<dbReference type="STRING" id="3635.Q5K4H9"/>
<dbReference type="PaxDb" id="3635-Q5K4H9"/>
<dbReference type="Proteomes" id="UP000189702">
    <property type="component" value="Unplaced"/>
</dbReference>
<dbReference type="GO" id="GO:0005886">
    <property type="term" value="C:plasma membrane"/>
    <property type="evidence" value="ECO:0007669"/>
    <property type="project" value="UniProtKB-SubCell"/>
</dbReference>
<dbReference type="InterPro" id="IPR006459">
    <property type="entry name" value="CASP/CASPL"/>
</dbReference>
<dbReference type="InterPro" id="IPR006702">
    <property type="entry name" value="CASP_dom"/>
</dbReference>
<dbReference type="NCBIfam" id="TIGR01569">
    <property type="entry name" value="A_tha_TIGR01569"/>
    <property type="match status" value="1"/>
</dbReference>
<dbReference type="PANTHER" id="PTHR33573:SF30">
    <property type="entry name" value="CASP-LIKE PROTEIN 2C1-RELATED"/>
    <property type="match status" value="1"/>
</dbReference>
<dbReference type="PANTHER" id="PTHR33573">
    <property type="entry name" value="CASP-LIKE PROTEIN 4A4"/>
    <property type="match status" value="1"/>
</dbReference>
<dbReference type="Pfam" id="PF04535">
    <property type="entry name" value="CASP_dom"/>
    <property type="match status" value="1"/>
</dbReference>
<accession>Q5K4H9</accession>
<organism>
    <name type="scientific">Gossypium hirsutum</name>
    <name type="common">Upland cotton</name>
    <name type="synonym">Gossypium mexicanum</name>
    <dbReference type="NCBI Taxonomy" id="3635"/>
    <lineage>
        <taxon>Eukaryota</taxon>
        <taxon>Viridiplantae</taxon>
        <taxon>Streptophyta</taxon>
        <taxon>Embryophyta</taxon>
        <taxon>Tracheophyta</taxon>
        <taxon>Spermatophyta</taxon>
        <taxon>Magnoliopsida</taxon>
        <taxon>eudicotyledons</taxon>
        <taxon>Gunneridae</taxon>
        <taxon>Pentapetalae</taxon>
        <taxon>rosids</taxon>
        <taxon>malvids</taxon>
        <taxon>Malvales</taxon>
        <taxon>Malvaceae</taxon>
        <taxon>Malvoideae</taxon>
        <taxon>Gossypium</taxon>
    </lineage>
</organism>
<gene>
    <name type="primary">XL3</name>
</gene>
<protein>
    <recommendedName>
        <fullName>CASP-like protein XL3</fullName>
    </recommendedName>
    <alternativeName>
        <fullName>CASP-like protein 2C1</fullName>
        <shortName>GhCASPL2C1</shortName>
    </alternativeName>
</protein>
<feature type="chain" id="PRO_0000391603" description="CASP-like protein XL3">
    <location>
        <begin position="1"/>
        <end position="180"/>
    </location>
</feature>
<feature type="topological domain" description="Cytoplasmic" evidence="2">
    <location>
        <begin position="1"/>
        <end position="7"/>
    </location>
</feature>
<feature type="transmembrane region" description="Helical" evidence="2">
    <location>
        <begin position="8"/>
        <end position="28"/>
    </location>
</feature>
<feature type="topological domain" description="Extracellular" evidence="2">
    <location>
        <begin position="29"/>
        <end position="49"/>
    </location>
</feature>
<feature type="transmembrane region" description="Helical" evidence="2">
    <location>
        <begin position="50"/>
        <end position="70"/>
    </location>
</feature>
<feature type="topological domain" description="Cytoplasmic" evidence="2">
    <location>
        <begin position="71"/>
        <end position="98"/>
    </location>
</feature>
<feature type="transmembrane region" description="Helical" evidence="2">
    <location>
        <begin position="99"/>
        <end position="119"/>
    </location>
</feature>
<feature type="topological domain" description="Extracellular" evidence="2">
    <location>
        <begin position="120"/>
        <end position="140"/>
    </location>
</feature>
<feature type="transmembrane region" description="Helical" evidence="2">
    <location>
        <begin position="141"/>
        <end position="161"/>
    </location>
</feature>
<feature type="topological domain" description="Cytoplasmic" evidence="2">
    <location>
        <begin position="162"/>
        <end position="180"/>
    </location>
</feature>